<feature type="chain" id="PRO_0000380932" description="8-amino-7-oxononanoate synthase">
    <location>
        <begin position="1"/>
        <end position="471"/>
    </location>
</feature>
<feature type="region of interest" description="Disordered" evidence="2">
    <location>
        <begin position="409"/>
        <end position="471"/>
    </location>
</feature>
<feature type="binding site" evidence="1">
    <location>
        <position position="40"/>
    </location>
    <ligand>
        <name>substrate</name>
    </ligand>
</feature>
<feature type="binding site" evidence="1">
    <location>
        <begin position="131"/>
        <end position="132"/>
    </location>
    <ligand>
        <name>pyridoxal 5'-phosphate</name>
        <dbReference type="ChEBI" id="CHEBI:597326"/>
    </ligand>
</feature>
<feature type="binding site" evidence="1">
    <location>
        <position position="156"/>
    </location>
    <ligand>
        <name>substrate</name>
    </ligand>
</feature>
<feature type="binding site" evidence="1">
    <location>
        <position position="202"/>
    </location>
    <ligand>
        <name>pyridoxal 5'-phosphate</name>
        <dbReference type="ChEBI" id="CHEBI:597326"/>
    </ligand>
</feature>
<feature type="binding site" evidence="1">
    <location>
        <position position="230"/>
    </location>
    <ligand>
        <name>pyridoxal 5'-phosphate</name>
        <dbReference type="ChEBI" id="CHEBI:597326"/>
    </ligand>
</feature>
<feature type="binding site" evidence="1">
    <location>
        <position position="258"/>
    </location>
    <ligand>
        <name>pyridoxal 5'-phosphate</name>
        <dbReference type="ChEBI" id="CHEBI:597326"/>
    </ligand>
</feature>
<feature type="binding site" evidence="1">
    <location>
        <position position="377"/>
    </location>
    <ligand>
        <name>substrate</name>
    </ligand>
</feature>
<feature type="modified residue" description="N6-(pyridoxal phosphate)lysine" evidence="1">
    <location>
        <position position="261"/>
    </location>
</feature>
<keyword id="KW-0093">Biotin biosynthesis</keyword>
<keyword id="KW-0663">Pyridoxal phosphate</keyword>
<keyword id="KW-0808">Transferase</keyword>
<gene>
    <name evidence="1" type="primary">bioF</name>
    <name type="ordered locus">Bamb_2981</name>
</gene>
<reference key="1">
    <citation type="submission" date="2006-08" db="EMBL/GenBank/DDBJ databases">
        <title>Complete sequence of chromosome 1 of Burkholderia cepacia AMMD.</title>
        <authorList>
            <person name="Copeland A."/>
            <person name="Lucas S."/>
            <person name="Lapidus A."/>
            <person name="Barry K."/>
            <person name="Detter J.C."/>
            <person name="Glavina del Rio T."/>
            <person name="Hammon N."/>
            <person name="Israni S."/>
            <person name="Pitluck S."/>
            <person name="Bruce D."/>
            <person name="Chain P."/>
            <person name="Malfatti S."/>
            <person name="Shin M."/>
            <person name="Vergez L."/>
            <person name="Schmutz J."/>
            <person name="Larimer F."/>
            <person name="Land M."/>
            <person name="Hauser L."/>
            <person name="Kyrpides N."/>
            <person name="Kim E."/>
            <person name="Parke J."/>
            <person name="Coenye T."/>
            <person name="Konstantinidis K."/>
            <person name="Ramette A."/>
            <person name="Tiedje J."/>
            <person name="Richardson P."/>
        </authorList>
    </citation>
    <scope>NUCLEOTIDE SEQUENCE [LARGE SCALE GENOMIC DNA]</scope>
    <source>
        <strain>ATCC BAA-244 / DSM 16087 / CCUG 44356 / LMG 19182 / AMMD</strain>
    </source>
</reference>
<evidence type="ECO:0000255" key="1">
    <source>
        <dbReference type="HAMAP-Rule" id="MF_01693"/>
    </source>
</evidence>
<evidence type="ECO:0000256" key="2">
    <source>
        <dbReference type="SAM" id="MobiDB-lite"/>
    </source>
</evidence>
<proteinExistence type="inferred from homology"/>
<comment type="function">
    <text evidence="1">Catalyzes the decarboxylative condensation of pimeloyl-[acyl-carrier protein] and L-alanine to produce 8-amino-7-oxononanoate (AON), [acyl-carrier protein], and carbon dioxide.</text>
</comment>
<comment type="catalytic activity">
    <reaction evidence="1">
        <text>6-carboxyhexanoyl-[ACP] + L-alanine + H(+) = (8S)-8-amino-7-oxononanoate + holo-[ACP] + CO2</text>
        <dbReference type="Rhea" id="RHEA:42288"/>
        <dbReference type="Rhea" id="RHEA-COMP:9685"/>
        <dbReference type="Rhea" id="RHEA-COMP:9955"/>
        <dbReference type="ChEBI" id="CHEBI:15378"/>
        <dbReference type="ChEBI" id="CHEBI:16526"/>
        <dbReference type="ChEBI" id="CHEBI:57972"/>
        <dbReference type="ChEBI" id="CHEBI:64479"/>
        <dbReference type="ChEBI" id="CHEBI:78846"/>
        <dbReference type="ChEBI" id="CHEBI:149468"/>
        <dbReference type="EC" id="2.3.1.47"/>
    </reaction>
</comment>
<comment type="cofactor">
    <cofactor evidence="1">
        <name>pyridoxal 5'-phosphate</name>
        <dbReference type="ChEBI" id="CHEBI:597326"/>
    </cofactor>
</comment>
<comment type="pathway">
    <text evidence="1">Cofactor biosynthesis; biotin biosynthesis.</text>
</comment>
<comment type="subunit">
    <text evidence="1">Homodimer.</text>
</comment>
<comment type="similarity">
    <text evidence="1">Belongs to the class-II pyridoxal-phosphate-dependent aminotransferase family. BioF subfamily.</text>
</comment>
<protein>
    <recommendedName>
        <fullName evidence="1">8-amino-7-oxononanoate synthase</fullName>
        <shortName evidence="1">AONS</shortName>
        <ecNumber evidence="1">2.3.1.47</ecNumber>
    </recommendedName>
    <alternativeName>
        <fullName evidence="1">7-keto-8-amino-pelargonic acid synthase</fullName>
        <shortName evidence="1">7-KAP synthase</shortName>
        <shortName evidence="1">KAPA synthase</shortName>
    </alternativeName>
    <alternativeName>
        <fullName evidence="1">8-amino-7-ketopelargonate synthase</fullName>
    </alternativeName>
</protein>
<organism>
    <name type="scientific">Burkholderia ambifaria (strain ATCC BAA-244 / DSM 16087 / CCUG 44356 / LMG 19182 / AMMD)</name>
    <name type="common">Burkholderia cepacia (strain AMMD)</name>
    <dbReference type="NCBI Taxonomy" id="339670"/>
    <lineage>
        <taxon>Bacteria</taxon>
        <taxon>Pseudomonadati</taxon>
        <taxon>Pseudomonadota</taxon>
        <taxon>Betaproteobacteria</taxon>
        <taxon>Burkholderiales</taxon>
        <taxon>Burkholderiaceae</taxon>
        <taxon>Burkholderia</taxon>
        <taxon>Burkholderia cepacia complex</taxon>
    </lineage>
</organism>
<name>BIOF_BURCM</name>
<sequence length="471" mass="49159">MTQTAPSSLRSLPPEGAATTNLLDTLQRGLAELDAQGLRRVRRTADTACDAHMRVDGRDIVGFASNDYLGLAAHPALVAAFAEGARRYGSGSGGSHLLGGHSRAHATLEDELAGFAGGFSDAPRALYFSTGYMANLAAMTALTGKHATIFSDALNHASLIDGMRLSRANVQVYPHADMAALAALLDASDAETKLIVSDTVFSMDGDIAPLAELVALAERHGAWLVVDDAHGFGVLGPQGRGALAAAALRSPNLIYVGTLGKAAGVAGAFVIAHETVIEWMIQRARSYIFTTAAPPAVAHAVSASLKVIAGDEGDARRAHLAALIERTRALLRMTRWQPVDSHTAVQPLVIGSNDATLAAMRSLDAHGLWVPAIRPPTVPVGTSRLRVSLSAAHSFDDLARLEAALIEASEGQTRREAEQPPRSLRSLPPEGAAVSVGAARRDAEQPPRSLRSLPPEGAAASLGAARRETAA</sequence>
<dbReference type="EC" id="2.3.1.47" evidence="1"/>
<dbReference type="EMBL" id="CP000440">
    <property type="protein sequence ID" value="ABI88537.1"/>
    <property type="molecule type" value="Genomic_DNA"/>
</dbReference>
<dbReference type="RefSeq" id="WP_011658068.1">
    <property type="nucleotide sequence ID" value="NC_008390.1"/>
</dbReference>
<dbReference type="SMR" id="Q0BBD6"/>
<dbReference type="GeneID" id="93084817"/>
<dbReference type="KEGG" id="bam:Bamb_2981"/>
<dbReference type="PATRIC" id="fig|339670.21.peg.1893"/>
<dbReference type="eggNOG" id="COG0156">
    <property type="taxonomic scope" value="Bacteria"/>
</dbReference>
<dbReference type="UniPathway" id="UPA00078"/>
<dbReference type="Proteomes" id="UP000000662">
    <property type="component" value="Chromosome 1"/>
</dbReference>
<dbReference type="GO" id="GO:0008710">
    <property type="term" value="F:8-amino-7-oxononanoate synthase activity"/>
    <property type="evidence" value="ECO:0007669"/>
    <property type="project" value="UniProtKB-UniRule"/>
</dbReference>
<dbReference type="GO" id="GO:0030170">
    <property type="term" value="F:pyridoxal phosphate binding"/>
    <property type="evidence" value="ECO:0007669"/>
    <property type="project" value="UniProtKB-UniRule"/>
</dbReference>
<dbReference type="GO" id="GO:0009102">
    <property type="term" value="P:biotin biosynthetic process"/>
    <property type="evidence" value="ECO:0007669"/>
    <property type="project" value="UniProtKB-UniRule"/>
</dbReference>
<dbReference type="Gene3D" id="3.90.1150.10">
    <property type="entry name" value="Aspartate Aminotransferase, domain 1"/>
    <property type="match status" value="1"/>
</dbReference>
<dbReference type="Gene3D" id="3.40.640.10">
    <property type="entry name" value="Type I PLP-dependent aspartate aminotransferase-like (Major domain)"/>
    <property type="match status" value="1"/>
</dbReference>
<dbReference type="HAMAP" id="MF_01693">
    <property type="entry name" value="BioF_aminotrans_2"/>
    <property type="match status" value="1"/>
</dbReference>
<dbReference type="InterPro" id="IPR004839">
    <property type="entry name" value="Aminotransferase_I/II_large"/>
</dbReference>
<dbReference type="InterPro" id="IPR050087">
    <property type="entry name" value="AON_synthase_class-II"/>
</dbReference>
<dbReference type="InterPro" id="IPR004723">
    <property type="entry name" value="AONS_Archaea/Proteobacteria"/>
</dbReference>
<dbReference type="InterPro" id="IPR022834">
    <property type="entry name" value="AONS_Proteobacteria"/>
</dbReference>
<dbReference type="InterPro" id="IPR015424">
    <property type="entry name" value="PyrdxlP-dep_Trfase"/>
</dbReference>
<dbReference type="InterPro" id="IPR015421">
    <property type="entry name" value="PyrdxlP-dep_Trfase_major"/>
</dbReference>
<dbReference type="InterPro" id="IPR015422">
    <property type="entry name" value="PyrdxlP-dep_Trfase_small"/>
</dbReference>
<dbReference type="NCBIfam" id="TIGR00858">
    <property type="entry name" value="bioF"/>
    <property type="match status" value="1"/>
</dbReference>
<dbReference type="PANTHER" id="PTHR13693:SF100">
    <property type="entry name" value="8-AMINO-7-OXONONANOATE SYNTHASE"/>
    <property type="match status" value="1"/>
</dbReference>
<dbReference type="PANTHER" id="PTHR13693">
    <property type="entry name" value="CLASS II AMINOTRANSFERASE/8-AMINO-7-OXONONANOATE SYNTHASE"/>
    <property type="match status" value="1"/>
</dbReference>
<dbReference type="Pfam" id="PF00155">
    <property type="entry name" value="Aminotran_1_2"/>
    <property type="match status" value="1"/>
</dbReference>
<dbReference type="SUPFAM" id="SSF53383">
    <property type="entry name" value="PLP-dependent transferases"/>
    <property type="match status" value="1"/>
</dbReference>
<accession>Q0BBD6</accession>